<keyword id="KW-0066">ATP synthesis</keyword>
<keyword id="KW-0997">Cell inner membrane</keyword>
<keyword id="KW-1003">Cell membrane</keyword>
<keyword id="KW-0139">CF(1)</keyword>
<keyword id="KW-0375">Hydrogen ion transport</keyword>
<keyword id="KW-0406">Ion transport</keyword>
<keyword id="KW-0472">Membrane</keyword>
<keyword id="KW-1185">Reference proteome</keyword>
<keyword id="KW-0813">Transport</keyword>
<accession>Q0AKW2</accession>
<proteinExistence type="inferred from homology"/>
<comment type="function">
    <text evidence="1">Produces ATP from ADP in the presence of a proton gradient across the membrane.</text>
</comment>
<comment type="subunit">
    <text>F-type ATPases have 2 components, CF(1) - the catalytic core - and CF(0) - the membrane proton channel. CF(1) has five subunits: alpha(3), beta(3), gamma(1), delta(1), epsilon(1). CF(0) has three main subunits: a, b and c.</text>
</comment>
<comment type="subcellular location">
    <subcellularLocation>
        <location evidence="1">Cell inner membrane</location>
        <topology evidence="1">Peripheral membrane protein</topology>
    </subcellularLocation>
</comment>
<comment type="similarity">
    <text evidence="1">Belongs to the ATPase epsilon chain family.</text>
</comment>
<name>ATPE_MARMM</name>
<feature type="chain" id="PRO_0000265836" description="ATP synthase epsilon chain">
    <location>
        <begin position="1"/>
        <end position="133"/>
    </location>
</feature>
<evidence type="ECO:0000255" key="1">
    <source>
        <dbReference type="HAMAP-Rule" id="MF_00530"/>
    </source>
</evidence>
<reference key="1">
    <citation type="submission" date="2006-08" db="EMBL/GenBank/DDBJ databases">
        <title>Complete sequence of Maricaulis maris MCS10.</title>
        <authorList>
            <consortium name="US DOE Joint Genome Institute"/>
            <person name="Copeland A."/>
            <person name="Lucas S."/>
            <person name="Lapidus A."/>
            <person name="Barry K."/>
            <person name="Detter J.C."/>
            <person name="Glavina del Rio T."/>
            <person name="Hammon N."/>
            <person name="Israni S."/>
            <person name="Dalin E."/>
            <person name="Tice H."/>
            <person name="Pitluck S."/>
            <person name="Saunders E."/>
            <person name="Brettin T."/>
            <person name="Bruce D."/>
            <person name="Han C."/>
            <person name="Tapia R."/>
            <person name="Gilna P."/>
            <person name="Schmutz J."/>
            <person name="Larimer F."/>
            <person name="Land M."/>
            <person name="Hauser L."/>
            <person name="Kyrpides N."/>
            <person name="Mikhailova N."/>
            <person name="Viollier P."/>
            <person name="Stephens C."/>
            <person name="Richardson P."/>
        </authorList>
    </citation>
    <scope>NUCLEOTIDE SEQUENCE [LARGE SCALE GENOMIC DNA]</scope>
    <source>
        <strain>MCS10</strain>
    </source>
</reference>
<sequence>MADKLHFDLVSPERRLFAGNVDQVVVPGEEGDFGVLPNHAPFMSVIRPGAITVIDDGKETRTFIHGGFAEVTAAGLTILAEEAIAVADIDTEKLARDLSDAREDVTAAKDEEERDQAAALVAKYEAMQAVAAH</sequence>
<gene>
    <name evidence="1" type="primary">atpC</name>
    <name type="ordered locus">Mmar10_2800</name>
</gene>
<organism>
    <name type="scientific">Maricaulis maris (strain MCS10)</name>
    <name type="common">Caulobacter maris</name>
    <dbReference type="NCBI Taxonomy" id="394221"/>
    <lineage>
        <taxon>Bacteria</taxon>
        <taxon>Pseudomonadati</taxon>
        <taxon>Pseudomonadota</taxon>
        <taxon>Alphaproteobacteria</taxon>
        <taxon>Maricaulales</taxon>
        <taxon>Maricaulaceae</taxon>
        <taxon>Maricaulis</taxon>
    </lineage>
</organism>
<protein>
    <recommendedName>
        <fullName evidence="1">ATP synthase epsilon chain</fullName>
    </recommendedName>
    <alternativeName>
        <fullName evidence="1">ATP synthase F1 sector epsilon subunit</fullName>
    </alternativeName>
    <alternativeName>
        <fullName evidence="1">F-ATPase epsilon subunit</fullName>
    </alternativeName>
</protein>
<dbReference type="EMBL" id="CP000449">
    <property type="protein sequence ID" value="ABI67081.1"/>
    <property type="molecule type" value="Genomic_DNA"/>
</dbReference>
<dbReference type="RefSeq" id="WP_011644725.1">
    <property type="nucleotide sequence ID" value="NC_008347.1"/>
</dbReference>
<dbReference type="SMR" id="Q0AKW2"/>
<dbReference type="STRING" id="394221.Mmar10_2800"/>
<dbReference type="KEGG" id="mmr:Mmar10_2800"/>
<dbReference type="eggNOG" id="COG0355">
    <property type="taxonomic scope" value="Bacteria"/>
</dbReference>
<dbReference type="HOGENOM" id="CLU_084338_2_1_5"/>
<dbReference type="OrthoDB" id="9799969at2"/>
<dbReference type="Proteomes" id="UP000001964">
    <property type="component" value="Chromosome"/>
</dbReference>
<dbReference type="GO" id="GO:0005886">
    <property type="term" value="C:plasma membrane"/>
    <property type="evidence" value="ECO:0007669"/>
    <property type="project" value="UniProtKB-SubCell"/>
</dbReference>
<dbReference type="GO" id="GO:0045259">
    <property type="term" value="C:proton-transporting ATP synthase complex"/>
    <property type="evidence" value="ECO:0007669"/>
    <property type="project" value="UniProtKB-KW"/>
</dbReference>
<dbReference type="GO" id="GO:0005524">
    <property type="term" value="F:ATP binding"/>
    <property type="evidence" value="ECO:0007669"/>
    <property type="project" value="UniProtKB-UniRule"/>
</dbReference>
<dbReference type="GO" id="GO:0046933">
    <property type="term" value="F:proton-transporting ATP synthase activity, rotational mechanism"/>
    <property type="evidence" value="ECO:0007669"/>
    <property type="project" value="UniProtKB-UniRule"/>
</dbReference>
<dbReference type="CDD" id="cd12152">
    <property type="entry name" value="F1-ATPase_delta"/>
    <property type="match status" value="1"/>
</dbReference>
<dbReference type="Gene3D" id="2.60.15.10">
    <property type="entry name" value="F0F1 ATP synthase delta/epsilon subunit, N-terminal"/>
    <property type="match status" value="1"/>
</dbReference>
<dbReference type="HAMAP" id="MF_00530">
    <property type="entry name" value="ATP_synth_epsil_bac"/>
    <property type="match status" value="1"/>
</dbReference>
<dbReference type="InterPro" id="IPR001469">
    <property type="entry name" value="ATP_synth_F1_dsu/esu"/>
</dbReference>
<dbReference type="InterPro" id="IPR020546">
    <property type="entry name" value="ATP_synth_F1_dsu/esu_N"/>
</dbReference>
<dbReference type="InterPro" id="IPR036771">
    <property type="entry name" value="ATPsynth_dsu/esu_N"/>
</dbReference>
<dbReference type="NCBIfam" id="TIGR01216">
    <property type="entry name" value="ATP_synt_epsi"/>
    <property type="match status" value="1"/>
</dbReference>
<dbReference type="NCBIfam" id="NF001851">
    <property type="entry name" value="PRK00571.2-4"/>
    <property type="match status" value="1"/>
</dbReference>
<dbReference type="NCBIfam" id="NF009983">
    <property type="entry name" value="PRK13449.1"/>
    <property type="match status" value="1"/>
</dbReference>
<dbReference type="PANTHER" id="PTHR13822">
    <property type="entry name" value="ATP SYNTHASE DELTA/EPSILON CHAIN"/>
    <property type="match status" value="1"/>
</dbReference>
<dbReference type="PANTHER" id="PTHR13822:SF10">
    <property type="entry name" value="ATP SYNTHASE EPSILON CHAIN, CHLOROPLASTIC"/>
    <property type="match status" value="1"/>
</dbReference>
<dbReference type="Pfam" id="PF02823">
    <property type="entry name" value="ATP-synt_DE_N"/>
    <property type="match status" value="1"/>
</dbReference>
<dbReference type="SUPFAM" id="SSF51344">
    <property type="entry name" value="Epsilon subunit of F1F0-ATP synthase N-terminal domain"/>
    <property type="match status" value="1"/>
</dbReference>